<comment type="function">
    <text evidence="1">Specifically methylates the N7 position of guanine in position 527 of 16S rRNA.</text>
</comment>
<comment type="catalytic activity">
    <reaction evidence="1">
        <text>guanosine(527) in 16S rRNA + S-adenosyl-L-methionine = N(7)-methylguanosine(527) in 16S rRNA + S-adenosyl-L-homocysteine</text>
        <dbReference type="Rhea" id="RHEA:42732"/>
        <dbReference type="Rhea" id="RHEA-COMP:10209"/>
        <dbReference type="Rhea" id="RHEA-COMP:10210"/>
        <dbReference type="ChEBI" id="CHEBI:57856"/>
        <dbReference type="ChEBI" id="CHEBI:59789"/>
        <dbReference type="ChEBI" id="CHEBI:74269"/>
        <dbReference type="ChEBI" id="CHEBI:74480"/>
        <dbReference type="EC" id="2.1.1.170"/>
    </reaction>
</comment>
<comment type="subcellular location">
    <subcellularLocation>
        <location evidence="1">Cytoplasm</location>
    </subcellularLocation>
</comment>
<comment type="similarity">
    <text evidence="1">Belongs to the methyltransferase superfamily. RNA methyltransferase RsmG family.</text>
</comment>
<sequence>MTEGLLALGIEQLGLDLSPQNVADLELFLQEMTRWNQVHNLTAIDNEEGSIRLHLIDSIAVLPVMRRFLPQQNPKIADLGSGGGLPAIPIAIVEPNWRLTLIEAIRKKTAFLQHVRGKLKLKNIEVISDRVENVALQQSGQFDAVISRAFTNLARFLDLSLPLLKPDGLVFAMKAKRADEEMQNVSMQDWHLLADEPLHIPNLAVERRLLVLTPVRKLPLPI</sequence>
<name>RSMG_POLAQ</name>
<dbReference type="EC" id="2.1.1.170" evidence="1"/>
<dbReference type="EMBL" id="CP000655">
    <property type="protein sequence ID" value="ABP33238.1"/>
    <property type="molecule type" value="Genomic_DNA"/>
</dbReference>
<dbReference type="RefSeq" id="WP_011901864.1">
    <property type="nucleotide sequence ID" value="NC_009379.1"/>
</dbReference>
<dbReference type="SMR" id="A4SUS4"/>
<dbReference type="GeneID" id="31480352"/>
<dbReference type="KEGG" id="pnu:Pnuc_0016"/>
<dbReference type="eggNOG" id="COG0357">
    <property type="taxonomic scope" value="Bacteria"/>
</dbReference>
<dbReference type="HOGENOM" id="CLU_065341_2_0_4"/>
<dbReference type="Proteomes" id="UP000000231">
    <property type="component" value="Chromosome"/>
</dbReference>
<dbReference type="GO" id="GO:0005829">
    <property type="term" value="C:cytosol"/>
    <property type="evidence" value="ECO:0007669"/>
    <property type="project" value="TreeGrafter"/>
</dbReference>
<dbReference type="GO" id="GO:0070043">
    <property type="term" value="F:rRNA (guanine-N7-)-methyltransferase activity"/>
    <property type="evidence" value="ECO:0007669"/>
    <property type="project" value="UniProtKB-UniRule"/>
</dbReference>
<dbReference type="CDD" id="cd02440">
    <property type="entry name" value="AdoMet_MTases"/>
    <property type="match status" value="1"/>
</dbReference>
<dbReference type="Gene3D" id="3.40.50.150">
    <property type="entry name" value="Vaccinia Virus protein VP39"/>
    <property type="match status" value="1"/>
</dbReference>
<dbReference type="HAMAP" id="MF_00074">
    <property type="entry name" value="16SrRNA_methyltr_G"/>
    <property type="match status" value="1"/>
</dbReference>
<dbReference type="InterPro" id="IPR003682">
    <property type="entry name" value="rRNA_ssu_MeTfrase_G"/>
</dbReference>
<dbReference type="InterPro" id="IPR029063">
    <property type="entry name" value="SAM-dependent_MTases_sf"/>
</dbReference>
<dbReference type="NCBIfam" id="TIGR00138">
    <property type="entry name" value="rsmG_gidB"/>
    <property type="match status" value="1"/>
</dbReference>
<dbReference type="PANTHER" id="PTHR31760">
    <property type="entry name" value="S-ADENOSYL-L-METHIONINE-DEPENDENT METHYLTRANSFERASES SUPERFAMILY PROTEIN"/>
    <property type="match status" value="1"/>
</dbReference>
<dbReference type="PANTHER" id="PTHR31760:SF0">
    <property type="entry name" value="S-ADENOSYL-L-METHIONINE-DEPENDENT METHYLTRANSFERASES SUPERFAMILY PROTEIN"/>
    <property type="match status" value="1"/>
</dbReference>
<dbReference type="Pfam" id="PF02527">
    <property type="entry name" value="GidB"/>
    <property type="match status" value="1"/>
</dbReference>
<dbReference type="PIRSF" id="PIRSF003078">
    <property type="entry name" value="GidB"/>
    <property type="match status" value="1"/>
</dbReference>
<dbReference type="SUPFAM" id="SSF53335">
    <property type="entry name" value="S-adenosyl-L-methionine-dependent methyltransferases"/>
    <property type="match status" value="1"/>
</dbReference>
<protein>
    <recommendedName>
        <fullName evidence="1">Ribosomal RNA small subunit methyltransferase G</fullName>
        <ecNumber evidence="1">2.1.1.170</ecNumber>
    </recommendedName>
    <alternativeName>
        <fullName evidence="1">16S rRNA 7-methylguanosine methyltransferase</fullName>
        <shortName evidence="1">16S rRNA m7G methyltransferase</shortName>
    </alternativeName>
</protein>
<proteinExistence type="inferred from homology"/>
<keyword id="KW-0963">Cytoplasm</keyword>
<keyword id="KW-0489">Methyltransferase</keyword>
<keyword id="KW-1185">Reference proteome</keyword>
<keyword id="KW-0698">rRNA processing</keyword>
<keyword id="KW-0949">S-adenosyl-L-methionine</keyword>
<keyword id="KW-0808">Transferase</keyword>
<gene>
    <name evidence="1" type="primary">rsmG</name>
    <name type="ordered locus">Pnuc_0016</name>
</gene>
<evidence type="ECO:0000255" key="1">
    <source>
        <dbReference type="HAMAP-Rule" id="MF_00074"/>
    </source>
</evidence>
<organism>
    <name type="scientific">Polynucleobacter asymbioticus (strain DSM 18221 / CIP 109841 / QLW-P1DMWA-1)</name>
    <name type="common">Polynucleobacter necessarius subsp. asymbioticus</name>
    <dbReference type="NCBI Taxonomy" id="312153"/>
    <lineage>
        <taxon>Bacteria</taxon>
        <taxon>Pseudomonadati</taxon>
        <taxon>Pseudomonadota</taxon>
        <taxon>Betaproteobacteria</taxon>
        <taxon>Burkholderiales</taxon>
        <taxon>Burkholderiaceae</taxon>
        <taxon>Polynucleobacter</taxon>
    </lineage>
</organism>
<feature type="chain" id="PRO_0000335397" description="Ribosomal RNA small subunit methyltransferase G">
    <location>
        <begin position="1"/>
        <end position="222"/>
    </location>
</feature>
<feature type="binding site" evidence="1">
    <location>
        <position position="80"/>
    </location>
    <ligand>
        <name>S-adenosyl-L-methionine</name>
        <dbReference type="ChEBI" id="CHEBI:59789"/>
    </ligand>
</feature>
<feature type="binding site" evidence="1">
    <location>
        <position position="85"/>
    </location>
    <ligand>
        <name>S-adenosyl-L-methionine</name>
        <dbReference type="ChEBI" id="CHEBI:59789"/>
    </ligand>
</feature>
<feature type="binding site" evidence="1">
    <location>
        <begin position="131"/>
        <end position="132"/>
    </location>
    <ligand>
        <name>S-adenosyl-L-methionine</name>
        <dbReference type="ChEBI" id="CHEBI:59789"/>
    </ligand>
</feature>
<feature type="binding site" evidence="1">
    <location>
        <position position="148"/>
    </location>
    <ligand>
        <name>S-adenosyl-L-methionine</name>
        <dbReference type="ChEBI" id="CHEBI:59789"/>
    </ligand>
</feature>
<reference key="1">
    <citation type="journal article" date="2012" name="Stand. Genomic Sci.">
        <title>Complete genome sequence of Polynucleobacter necessarius subsp. asymbioticus type strain (QLW-P1DMWA-1(T)).</title>
        <authorList>
            <person name="Meincke L."/>
            <person name="Copeland A."/>
            <person name="Lapidus A."/>
            <person name="Lucas S."/>
            <person name="Berry K.W."/>
            <person name="Del Rio T.G."/>
            <person name="Hammon N."/>
            <person name="Dalin E."/>
            <person name="Tice H."/>
            <person name="Pitluck S."/>
            <person name="Richardson P."/>
            <person name="Bruce D."/>
            <person name="Goodwin L."/>
            <person name="Han C."/>
            <person name="Tapia R."/>
            <person name="Detter J.C."/>
            <person name="Schmutz J."/>
            <person name="Brettin T."/>
            <person name="Larimer F."/>
            <person name="Land M."/>
            <person name="Hauser L."/>
            <person name="Kyrpides N.C."/>
            <person name="Ivanova N."/>
            <person name="Goker M."/>
            <person name="Woyke T."/>
            <person name="Wu Q.L."/>
            <person name="Pockl M."/>
            <person name="Hahn M.W."/>
            <person name="Klenk H.P."/>
        </authorList>
    </citation>
    <scope>NUCLEOTIDE SEQUENCE [LARGE SCALE GENOMIC DNA]</scope>
    <source>
        <strain>DSM 18221 / CIP 109841 / QLW-P1DMWA-1</strain>
    </source>
</reference>
<accession>A4SUS4</accession>